<name>CE290_MOUSE</name>
<evidence type="ECO:0000250" key="1"/>
<evidence type="ECO:0000250" key="2">
    <source>
        <dbReference type="UniProtKB" id="O15078"/>
    </source>
</evidence>
<evidence type="ECO:0000250" key="3">
    <source>
        <dbReference type="UniProtKB" id="Q9TU23"/>
    </source>
</evidence>
<evidence type="ECO:0000255" key="4"/>
<evidence type="ECO:0000256" key="5">
    <source>
        <dbReference type="SAM" id="MobiDB-lite"/>
    </source>
</evidence>
<evidence type="ECO:0000269" key="6">
    <source>
    </source>
</evidence>
<evidence type="ECO:0000269" key="7">
    <source>
    </source>
</evidence>
<evidence type="ECO:0000269" key="8">
    <source>
    </source>
</evidence>
<evidence type="ECO:0000269" key="9">
    <source>
    </source>
</evidence>
<evidence type="ECO:0000269" key="10">
    <source>
    </source>
</evidence>
<evidence type="ECO:0000269" key="11">
    <source>
    </source>
</evidence>
<evidence type="ECO:0000269" key="12">
    <source>
    </source>
</evidence>
<evidence type="ECO:0000269" key="13">
    <source>
    </source>
</evidence>
<evidence type="ECO:0000269" key="14">
    <source>
    </source>
</evidence>
<evidence type="ECO:0000269" key="15">
    <source>
    </source>
</evidence>
<evidence type="ECO:0000269" key="16">
    <source>
    </source>
</evidence>
<evidence type="ECO:0000303" key="17">
    <source>
    </source>
</evidence>
<evidence type="ECO:0000305" key="18"/>
<evidence type="ECO:0000312" key="19">
    <source>
        <dbReference type="EMBL" id="BAC26700.1"/>
    </source>
</evidence>
<evidence type="ECO:0000312" key="20">
    <source>
        <dbReference type="EMBL" id="BAD32218.1"/>
    </source>
</evidence>
<evidence type="ECO:0000312" key="21">
    <source>
        <dbReference type="MGI" id="MGI:2384917"/>
    </source>
</evidence>
<organism>
    <name type="scientific">Mus musculus</name>
    <name type="common">Mouse</name>
    <dbReference type="NCBI Taxonomy" id="10090"/>
    <lineage>
        <taxon>Eukaryota</taxon>
        <taxon>Metazoa</taxon>
        <taxon>Chordata</taxon>
        <taxon>Craniata</taxon>
        <taxon>Vertebrata</taxon>
        <taxon>Euteleostomi</taxon>
        <taxon>Mammalia</taxon>
        <taxon>Eutheria</taxon>
        <taxon>Euarchontoglires</taxon>
        <taxon>Glires</taxon>
        <taxon>Rodentia</taxon>
        <taxon>Myomorpha</taxon>
        <taxon>Muroidea</taxon>
        <taxon>Muridae</taxon>
        <taxon>Murinae</taxon>
        <taxon>Mus</taxon>
        <taxon>Mus</taxon>
    </lineage>
</organism>
<sequence>MPPNIKWKELIKVDPDDLPRQEELADKLLISLSKVEVNELKNEDQENMIHLFRITQSLMKMKAQEVELALEEVEKAGEEQAKFENQLKTKVMKLENELEMAQQSAGGRDTRFLRDEIRQLEKQLEQKDRELEDMEKELDKEKKVNEQLALRNEEAENENSKLRRENEQLRQDIIDYQKQIDSQKESLLSRRGEDSDYRSQLSKKNYELVQYLDEIQTLTEANEKIEVQNQEMRKNLEESVQEMEKMTDEYNRMKALVHQSDAVMDQIKKENEHYRLQVRELTDLLKAKDEEDDPVMMAVNAKVEEWKLILSSKDDEIIEYQQMLQSLRGKLKNAQLDADKSNIMALKQGIQERDSQIKMLTEQVEQYTKEMEKNTFIIEDLKNELQKDKGTSNFYQQTHYMKIHSKVQILEEKTKEAERIAELAEADAREKDKELVEALKRLKDYESGVYGLEDAVIEIKNCKAQIKIRDGEMEVLTKEINKLEMKINDILDENEALRERAGLEPKTMIDLTEFRNSKRLKQQQYRAENQVLLKEIESLEEERLDLKRKIRQMAQERGKRNAASGLTIDDLNLSETFSHENKIEGRKLNFMSLNNMNETQSKNEFLSRELAEKEKDLERSRTVIAKFQSKLKELVEENKQLEEGMKEILQAIKDMPKDSDVKGGETSLIIPSLERLVNAMESKNAEGIFDASLHLKAQVDQLTGRNEELRQELRQSRKEAVNYSQQLVKANLKIDHLEKETDLLRQSAGSNVVYKGIDLPDGIAPSSAYIINSQNEYLIHLLQELDNKEKKLKHLEDSLEDYNRKFAVIRHQQSLLYKEYLSEKDIWKTDSEMIREEKRKLEDQAEQDAVKVKEYNNLLSALQMDSNEMKKMLSENSRKITVLQVNEKSLIRQYTTLVEMERHLRKENGKHRNDVIAMEAEVTEKLGSLQRFKEMAIFKIAALQKVIDNSVSLSELELANKQYNELTTKYRDILQKDNMLVQRTSNLEHLECENASLKEQMEAISKELEITKEKLHTIEQAWEQETKLGNDSNMDKAKKSMTNSDIVSISKKITVLEMKELNERQRAEHCQKMYEHLRTSLKQMEERNFELETKFTELTKINLDAQKVEQMLRDELADSVTKAVSDADRQRILELEKSEVELKVEVSKLREISDIAKRQVDFLNSQQQSREKEVESLRTQLLDFQAQSDEKALIAKLHQHVVSLQISEATALGKLESVTSKLQKMEAYNLRLEQKLDEKEQALYYARLEGRNRAKHLRQTIQSLRRQFSGALPLAQQEKFSKTMIQLQNDKLKIMQEMKNSQQEHRNMENKTLELELKLKGLEELISTLKDARGAQKVINWHVKIEELRLQELKLNRELVKGKEEIKYLNNIISEYEHTINSLEEEIVQQSKFHEERQMAWDQREVELERQLDIFDHQQNEILSAAQKFEDSTGSMPDPSLPLPNQLEIALRKIKENIQVILKTQATCKSLEEKLKEKESALRLAEQNILSRDKVINELRLRLPATADREKLIAELERKELEPKSHHTMKIAHQTIANMQARLNHKEEVLKKYQHLLEKAREEQREIVKKHEEDLHVLHHKLEQQADNSLNKFRQTAQDLLKQSPAPVPTNKHFIRLAEMEQTVAEQDDSLSSLLTKLKKVSKDLEKQKEITELKVREFENTKLRLQETHASEVKKVKAEVEDLRHALAQAHKDSQSLKSELQAQKEANSRAPTTTMRNLVDRLKSQLALKEKQQKALSRALLELRSEMTAAAEERIIAVTSQKEANLNVQQVVERHTRELKSQIEDLNENLLKLKEALKTSKNKENSLADDLNELNNELQKKQKAYNKILREKDGIDQENDELRRQIKRLSSGLQSKTLIDNKQSLIDELQKKVKKLESQLERKVDDVDIKPVKEKSSKEELIRWEEGKKWQTKVEGLRNRLKEKEGEAHGLAKQLNTLKELFAKADKEKLTLQKKLKTTGMTVDQVLGVRALESEKELEELKKKNLDLENDILYMRTQQALPRDSVVEDLHLQNKYLQEKLHTLEKKLSKEKYSQSLTSEIESDDHCQKEQELQKENLKLSSENIELKFQLEQANKDLPRLKNQVKDLKEMCEFLKKGKLELERKLGQVRGAGRSGKTIPELEKTIGLMKKVVEKVQRENEQLKKASGILTSEKMATIEEENRNLKAELEKLKAHFGRQLSMQFESKNKGTEKIVAENERLRKELKKEIEASEKLRIAKNNLELVNDKMAAQLEETGKRLQFAESRAPQLEGADSKSWKSIVVSRVYETKMKELESDIAKKNQSITDLKQLVREATEREQKAKKYTEDLEQQIEILKNVPEGAETEQELIRELQLLRLANNQMDKERAELIHQIEINKDQTRADSSIPDSDQLKEKINDLETQLRKLELEKQHSKEEVKKLKKELENFDPSFFEEIEDLKYNYKEEVKKNILLEEKLKKLSEQFGFELPSPLAASEHSEDGESPHSFPIY</sequence>
<accession>Q6A078</accession>
<accession>Q8BIB8</accession>
<dbReference type="EMBL" id="AK029960">
    <property type="protein sequence ID" value="BAC26700.1"/>
    <property type="molecule type" value="mRNA"/>
</dbReference>
<dbReference type="EMBL" id="AC153501">
    <property type="status" value="NOT_ANNOTATED_CDS"/>
    <property type="molecule type" value="Genomic_DNA"/>
</dbReference>
<dbReference type="EMBL" id="AK172940">
    <property type="protein sequence ID" value="BAD32218.1"/>
    <property type="molecule type" value="mRNA"/>
</dbReference>
<dbReference type="RefSeq" id="NP_666121.2">
    <property type="nucleotide sequence ID" value="NM_146009.2"/>
</dbReference>
<dbReference type="RefSeq" id="XP_006513591.1">
    <molecule id="Q6A078-1"/>
    <property type="nucleotide sequence ID" value="XM_006513528.4"/>
</dbReference>
<dbReference type="SMR" id="Q6A078"/>
<dbReference type="BioGRID" id="229729">
    <property type="interactions" value="49"/>
</dbReference>
<dbReference type="CORUM" id="Q6A078"/>
<dbReference type="DIP" id="DIP-46317N"/>
<dbReference type="FunCoup" id="Q6A078">
    <property type="interactions" value="2095"/>
</dbReference>
<dbReference type="IntAct" id="Q6A078">
    <property type="interactions" value="43"/>
</dbReference>
<dbReference type="STRING" id="10090.ENSMUSP00000151388"/>
<dbReference type="CarbonylDB" id="Q6A078"/>
<dbReference type="GlyGen" id="Q6A078">
    <property type="glycosylation" value="1 site, 1 O-linked glycan (1 site)"/>
</dbReference>
<dbReference type="iPTMnet" id="Q6A078"/>
<dbReference type="PhosphoSitePlus" id="Q6A078"/>
<dbReference type="jPOST" id="Q6A078"/>
<dbReference type="PaxDb" id="10090-ENSMUSP00000130899"/>
<dbReference type="ProteomicsDB" id="281448">
    <molecule id="Q6A078-1"/>
</dbReference>
<dbReference type="ProteomicsDB" id="281449">
    <molecule id="Q6A078-2"/>
</dbReference>
<dbReference type="Pumba" id="Q6A078"/>
<dbReference type="Antibodypedia" id="29900">
    <property type="antibodies" value="260 antibodies from 34 providers"/>
</dbReference>
<dbReference type="Ensembl" id="ENSMUST00000219765.2">
    <molecule id="Q6A078-1"/>
    <property type="protein sequence ID" value="ENSMUSP00000151712.2"/>
    <property type="gene ID" value="ENSMUSG00000019971.11"/>
</dbReference>
<dbReference type="GeneID" id="216274"/>
<dbReference type="KEGG" id="mmu:216274"/>
<dbReference type="UCSC" id="uc007gxw.2">
    <molecule id="Q6A078-2"/>
    <property type="organism name" value="mouse"/>
</dbReference>
<dbReference type="AGR" id="MGI:2384917"/>
<dbReference type="CTD" id="80184"/>
<dbReference type="MGI" id="MGI:2384917">
    <property type="gene designation" value="Cep290"/>
</dbReference>
<dbReference type="VEuPathDB" id="HostDB:ENSMUSG00000019971"/>
<dbReference type="eggNOG" id="ENOG502QPTZ">
    <property type="taxonomic scope" value="Eukaryota"/>
</dbReference>
<dbReference type="GeneTree" id="ENSGT00730000111039"/>
<dbReference type="InParanoid" id="Q6A078"/>
<dbReference type="OrthoDB" id="6351660at2759"/>
<dbReference type="PhylomeDB" id="Q6A078"/>
<dbReference type="Reactome" id="R-MMU-2565942">
    <property type="pathway name" value="Regulation of PLK1 Activity at G2/M Transition"/>
</dbReference>
<dbReference type="Reactome" id="R-MMU-380259">
    <property type="pathway name" value="Loss of Nlp from mitotic centrosomes"/>
</dbReference>
<dbReference type="Reactome" id="R-MMU-380270">
    <property type="pathway name" value="Recruitment of mitotic centrosome proteins and complexes"/>
</dbReference>
<dbReference type="Reactome" id="R-MMU-380284">
    <property type="pathway name" value="Loss of proteins required for interphase microtubule organization from the centrosome"/>
</dbReference>
<dbReference type="Reactome" id="R-MMU-380320">
    <property type="pathway name" value="Recruitment of NuMA to mitotic centrosomes"/>
</dbReference>
<dbReference type="Reactome" id="R-MMU-5620912">
    <property type="pathway name" value="Anchoring of the basal body to the plasma membrane"/>
</dbReference>
<dbReference type="Reactome" id="R-MMU-6798695">
    <property type="pathway name" value="Neutrophil degranulation"/>
</dbReference>
<dbReference type="Reactome" id="R-MMU-8854518">
    <property type="pathway name" value="AURKA Activation by TPX2"/>
</dbReference>
<dbReference type="BioGRID-ORCS" id="216274">
    <property type="hits" value="6 hits in 78 CRISPR screens"/>
</dbReference>
<dbReference type="CD-CODE" id="01CA17F3">
    <property type="entry name" value="Centrosome"/>
</dbReference>
<dbReference type="ChiTaRS" id="Cep290">
    <property type="organism name" value="mouse"/>
</dbReference>
<dbReference type="PRO" id="PR:Q6A078"/>
<dbReference type="Proteomes" id="UP000000589">
    <property type="component" value="Chromosome 10"/>
</dbReference>
<dbReference type="RNAct" id="Q6A078">
    <property type="molecule type" value="protein"/>
</dbReference>
<dbReference type="Bgee" id="ENSMUSG00000019971">
    <property type="expression patterns" value="Expressed in spermatid and 233 other cell types or tissues"/>
</dbReference>
<dbReference type="ExpressionAtlas" id="Q6A078">
    <property type="expression patterns" value="baseline and differential"/>
</dbReference>
<dbReference type="GO" id="GO:0034451">
    <property type="term" value="C:centriolar satellite"/>
    <property type="evidence" value="ECO:0000314"/>
    <property type="project" value="MGI"/>
</dbReference>
<dbReference type="GO" id="GO:0005814">
    <property type="term" value="C:centriole"/>
    <property type="evidence" value="ECO:0000314"/>
    <property type="project" value="MGI"/>
</dbReference>
<dbReference type="GO" id="GO:0005813">
    <property type="term" value="C:centrosome"/>
    <property type="evidence" value="ECO:0000314"/>
    <property type="project" value="UniProtKB"/>
</dbReference>
<dbReference type="GO" id="GO:0035869">
    <property type="term" value="C:ciliary transition zone"/>
    <property type="evidence" value="ECO:0000314"/>
    <property type="project" value="MGI"/>
</dbReference>
<dbReference type="GO" id="GO:0031410">
    <property type="term" value="C:cytoplasmic vesicle"/>
    <property type="evidence" value="ECO:0007669"/>
    <property type="project" value="UniProtKB-KW"/>
</dbReference>
<dbReference type="GO" id="GO:0005829">
    <property type="term" value="C:cytosol"/>
    <property type="evidence" value="ECO:0000250"/>
    <property type="project" value="HGNC-UCL"/>
</dbReference>
<dbReference type="GO" id="GO:0036038">
    <property type="term" value="C:MKS complex"/>
    <property type="evidence" value="ECO:0000314"/>
    <property type="project" value="UniProtKB"/>
</dbReference>
<dbReference type="GO" id="GO:0005634">
    <property type="term" value="C:nucleus"/>
    <property type="evidence" value="ECO:0000250"/>
    <property type="project" value="HGNC-UCL"/>
</dbReference>
<dbReference type="GO" id="GO:0032391">
    <property type="term" value="C:photoreceptor connecting cilium"/>
    <property type="evidence" value="ECO:0000314"/>
    <property type="project" value="UniProtKB"/>
</dbReference>
<dbReference type="GO" id="GO:0120206">
    <property type="term" value="C:photoreceptor distal connecting cilium"/>
    <property type="evidence" value="ECO:0000314"/>
    <property type="project" value="MGI"/>
</dbReference>
<dbReference type="GO" id="GO:0001750">
    <property type="term" value="C:photoreceptor outer segment"/>
    <property type="evidence" value="ECO:0000314"/>
    <property type="project" value="MGI"/>
</dbReference>
<dbReference type="GO" id="GO:0120205">
    <property type="term" value="C:photoreceptor proximal connecting cilium"/>
    <property type="evidence" value="ECO:0000314"/>
    <property type="project" value="MGI"/>
</dbReference>
<dbReference type="GO" id="GO:0032991">
    <property type="term" value="C:protein-containing complex"/>
    <property type="evidence" value="ECO:0000266"/>
    <property type="project" value="MGI"/>
</dbReference>
<dbReference type="GO" id="GO:0120200">
    <property type="term" value="C:rod photoreceptor outer segment"/>
    <property type="evidence" value="ECO:0000316"/>
    <property type="project" value="MGI"/>
</dbReference>
<dbReference type="GO" id="GO:0097711">
    <property type="term" value="P:ciliary basal body-plasma membrane docking"/>
    <property type="evidence" value="ECO:0000315"/>
    <property type="project" value="MGI"/>
</dbReference>
<dbReference type="GO" id="GO:1905349">
    <property type="term" value="P:ciliary transition zone assembly"/>
    <property type="evidence" value="ECO:0000315"/>
    <property type="project" value="MGI"/>
</dbReference>
<dbReference type="GO" id="GO:0060271">
    <property type="term" value="P:cilium assembly"/>
    <property type="evidence" value="ECO:0000315"/>
    <property type="project" value="UniProtKB"/>
</dbReference>
<dbReference type="GO" id="GO:0007368">
    <property type="term" value="P:determination of left/right symmetry"/>
    <property type="evidence" value="ECO:0000315"/>
    <property type="project" value="MGI"/>
</dbReference>
<dbReference type="GO" id="GO:0007163">
    <property type="term" value="P:establishment or maintenance of cell polarity"/>
    <property type="evidence" value="ECO:0000315"/>
    <property type="project" value="MGI"/>
</dbReference>
<dbReference type="GO" id="GO:0042462">
    <property type="term" value="P:eye photoreceptor cell development"/>
    <property type="evidence" value="ECO:0000250"/>
    <property type="project" value="HGNC-UCL"/>
</dbReference>
<dbReference type="GO" id="GO:0007507">
    <property type="term" value="P:heart development"/>
    <property type="evidence" value="ECO:0000315"/>
    <property type="project" value="MGI"/>
</dbReference>
<dbReference type="GO" id="GO:0030902">
    <property type="term" value="P:hindbrain development"/>
    <property type="evidence" value="ECO:0000250"/>
    <property type="project" value="HGNC-UCL"/>
</dbReference>
<dbReference type="GO" id="GO:0001822">
    <property type="term" value="P:kidney development"/>
    <property type="evidence" value="ECO:0000315"/>
    <property type="project" value="MGI"/>
</dbReference>
<dbReference type="GO" id="GO:0000226">
    <property type="term" value="P:microtubule cytoskeleton organization"/>
    <property type="evidence" value="ECO:0000316"/>
    <property type="project" value="MGI"/>
</dbReference>
<dbReference type="GO" id="GO:1905515">
    <property type="term" value="P:non-motile cilium assembly"/>
    <property type="evidence" value="ECO:0000315"/>
    <property type="project" value="MGI"/>
</dbReference>
<dbReference type="GO" id="GO:0030916">
    <property type="term" value="P:otic vesicle formation"/>
    <property type="evidence" value="ECO:0000250"/>
    <property type="project" value="HGNC-UCL"/>
</dbReference>
<dbReference type="GO" id="GO:0045494">
    <property type="term" value="P:photoreceptor cell maintenance"/>
    <property type="evidence" value="ECO:0000315"/>
    <property type="project" value="MGI"/>
</dbReference>
<dbReference type="GO" id="GO:0045893">
    <property type="term" value="P:positive regulation of DNA-templated transcription"/>
    <property type="evidence" value="ECO:0000250"/>
    <property type="project" value="HGNC-UCL"/>
</dbReference>
<dbReference type="GO" id="GO:0090316">
    <property type="term" value="P:positive regulation of intracellular protein transport"/>
    <property type="evidence" value="ECO:0000250"/>
    <property type="project" value="UniProtKB"/>
</dbReference>
<dbReference type="GO" id="GO:0048793">
    <property type="term" value="P:pronephros development"/>
    <property type="evidence" value="ECO:0000250"/>
    <property type="project" value="HGNC-UCL"/>
</dbReference>
<dbReference type="GO" id="GO:0008104">
    <property type="term" value="P:protein localization"/>
    <property type="evidence" value="ECO:0000315"/>
    <property type="project" value="MGI"/>
</dbReference>
<dbReference type="GO" id="GO:0015031">
    <property type="term" value="P:protein transport"/>
    <property type="evidence" value="ECO:0000315"/>
    <property type="project" value="UniProtKB"/>
</dbReference>
<dbReference type="GO" id="GO:0070201">
    <property type="term" value="P:regulation of establishment of protein localization"/>
    <property type="evidence" value="ECO:0000266"/>
    <property type="project" value="MGI"/>
</dbReference>
<dbReference type="GO" id="GO:0034976">
    <property type="term" value="P:response to endoplasmic reticulum stress"/>
    <property type="evidence" value="ECO:0000315"/>
    <property type="project" value="MGI"/>
</dbReference>
<dbReference type="GO" id="GO:0060041">
    <property type="term" value="P:retina development in camera-type eye"/>
    <property type="evidence" value="ECO:0000315"/>
    <property type="project" value="MGI"/>
</dbReference>
<dbReference type="InterPro" id="IPR032321">
    <property type="entry name" value="Cep209_CC5"/>
</dbReference>
<dbReference type="InterPro" id="IPR026201">
    <property type="entry name" value="Cep290"/>
</dbReference>
<dbReference type="PANTHER" id="PTHR18879">
    <property type="entry name" value="CENTROSOMAL PROTEIN OF 290 KDA"/>
    <property type="match status" value="1"/>
</dbReference>
<dbReference type="PANTHER" id="PTHR18879:SF20">
    <property type="entry name" value="CENTROSOMAL PROTEIN OF 290 KDA"/>
    <property type="match status" value="1"/>
</dbReference>
<dbReference type="Pfam" id="PF16574">
    <property type="entry name" value="CEP209_CC5"/>
    <property type="match status" value="1"/>
</dbReference>
<keyword id="KW-0010">Activator</keyword>
<keyword id="KW-0025">Alternative splicing</keyword>
<keyword id="KW-0966">Cell projection</keyword>
<keyword id="KW-0969">Cilium</keyword>
<keyword id="KW-0970">Cilium biogenesis/degradation</keyword>
<keyword id="KW-0175">Coiled coil</keyword>
<keyword id="KW-0963">Cytoplasm</keyword>
<keyword id="KW-0968">Cytoplasmic vesicle</keyword>
<keyword id="KW-0206">Cytoskeleton</keyword>
<keyword id="KW-0539">Nucleus</keyword>
<keyword id="KW-0653">Protein transport</keyword>
<keyword id="KW-1185">Reference proteome</keyword>
<keyword id="KW-0804">Transcription</keyword>
<keyword id="KW-0805">Transcription regulation</keyword>
<keyword id="KW-0813">Transport</keyword>
<keyword id="KW-0832">Ubl conjugation</keyword>
<gene>
    <name evidence="21" type="primary">Cep290</name>
    <name evidence="20" type="synonym">Kiaa0373</name>
    <name evidence="2" type="synonym">Nphp6</name>
</gene>
<comment type="function">
    <text evidence="2 8 12 14">Involved in early and late steps in cilia formation (PubMed:21565611). Its association with CCP110 is required for inhibition of primary cilia formation by CCP110 (By similarity). May play a role in early ciliogenesis in the disappearance of centriolar satellites and in the transition of primary ciliar vesicles (PCVs) to capped ciliary vesicles (CCVs). Required for the centrosomal recruitment of RAB8A and for the targeting of centriole satellite proteins to centrosomes such as of PCM1 (By similarity). Required for the correct localization of ciliary and phototransduction proteins in retinal photoreceptor cells; may play a role in ciliary transport processes (PubMed:16632484). Required for efficient recruitment of RAB8A to primary cilium (By similarity). In the ciliary transition zone is part of the tectonic-like complex (also named B9 complex) which is required for tissue-specific ciliogenesis and may regulate ciliary membrane composition (PubMed:21725307). Involved in regulation of the BBSome complex integrity, specifically for presence of BBS2, BBS5 and BBS8/TTC8 in the complex, and in ciliary targeting of selected BBSome cargos. May play a role in controlling entry of the BBSome complex to cilia possibly implicating IQCB1/NPHP5 (By similarity). Activates ATF4-mediated transcription (By similarity).</text>
</comment>
<comment type="subunit">
    <text evidence="2 3 8 11 12 14">Part of the tectonic-like complex (also named B9 complex) (PubMed:21725307). Interacts with ATF4 via its N-terminal region (By similarity). Associates with the BBSome complex, interacting (via N-terminus) with BBS4 (By similarity). Interacts with IQCB1/NPHP5; IQCB1 and CEP290/NPHP6 are proposed to form a functional NPHP5-6 module localized to the centrosome. Interacts with NPHP4; the interaction likely requires additional interactors (PubMed:21565611). Interacts with ZNF423, FAM161A, CEP162, CEP162, CEP131, TALPID3, CCDC13, CC2D2A, RPGRIP1 (By similarity). Can self-associate (homo- or heteromeric) (By similarity). Interacts with CCP110; required for suppressing cilia formation (By similarity). Interacts with RPGR (PubMed:16632484). Associates (via C-terminus) with microtubules; association to microtubule is reduced in response to cellular stress, such as ultraviolet light (UV) radiation or heat shock, in a process that requires p38 MAP kinase signaling (By similarity). Interacts with FAM161A (By similarity). Interacts with PCM1 (PubMed:17705300). Interacts with CCDC66 (By similarity). Interacts with ARMC9 and CSPP1 (By similarity).</text>
</comment>
<comment type="interaction">
    <interactant intactId="EBI-1811999">
        <id>Q6A078</id>
    </interactant>
    <interactant intactId="EBI-646843">
        <id>Q7TSH4</id>
        <label>Ccp110</label>
    </interactant>
    <organismsDiffer>false</organismsDiffer>
    <experiments>3</experiments>
</comment>
<comment type="interaction">
    <interactant intactId="EBI-1811999">
        <id>Q6A078</id>
    </interactant>
    <interactant intactId="EBI-776180">
        <id>O08788</id>
        <label>Dctn1</label>
    </interactant>
    <organismsDiffer>false</organismsDiffer>
    <experiments>2</experiments>
</comment>
<comment type="interaction">
    <interactant intactId="EBI-1811999">
        <id>Q6A078</id>
    </interactant>
    <interactant intactId="EBI-4282243">
        <id>Q8BP00</id>
        <label>Iqcb1</label>
    </interactant>
    <organismsDiffer>false</organismsDiffer>
    <experiments>6</experiments>
</comment>
<comment type="interaction">
    <interactant intactId="EBI-1811999">
        <id>Q6A078</id>
    </interactant>
    <interactant intactId="EBI-6169413">
        <id>P28741</id>
        <label>Kif3a</label>
    </interactant>
    <organismsDiffer>false</organismsDiffer>
    <experiments>3</experiments>
</comment>
<comment type="interaction">
    <interactant intactId="EBI-1811999">
        <id>Q6A078</id>
    </interactant>
    <interactant intactId="EBI-4284371">
        <id>Q9R0L6</id>
        <label>Pcm1</label>
    </interactant>
    <organismsDiffer>false</organismsDiffer>
    <experiments>4</experiments>
</comment>
<comment type="interaction">
    <interactant intactId="EBI-1811999">
        <id>Q6A078</id>
    </interactant>
    <interactant intactId="EBI-2290976">
        <id>P48725</id>
        <label>Pcnt</label>
    </interactant>
    <organismsDiffer>false</organismsDiffer>
    <experiments>2</experiments>
</comment>
<comment type="interaction">
    <interactant intactId="EBI-1811999">
        <id>Q6A078</id>
    </interactant>
    <interactant intactId="EBI-2550016">
        <id>Q9CU62</id>
        <label>Smc1a</label>
    </interactant>
    <organismsDiffer>false</organismsDiffer>
    <experiments>2</experiments>
</comment>
<comment type="subcellular location">
    <subcellularLocation>
        <location evidence="8 9 10">Cytoplasm</location>
        <location evidence="8 9 10">Cytoskeleton</location>
        <location evidence="8 9 10">Microtubule organizing center</location>
        <location evidence="8 9 10">Centrosome</location>
    </subcellularLocation>
    <subcellularLocation>
        <location evidence="10">Cytoplasm</location>
    </subcellularLocation>
    <subcellularLocation>
        <location evidence="14">Cytoplasm</location>
        <location evidence="14">Cytoskeleton</location>
        <location evidence="14">Microtubule organizing center</location>
        <location evidence="14">Centrosome</location>
        <location evidence="14">Centriolar satellite</location>
    </subcellularLocation>
    <subcellularLocation>
        <location evidence="8 10">Nucleus</location>
    </subcellularLocation>
    <subcellularLocation>
        <location evidence="8 9 15">Cytoplasm</location>
        <location evidence="8 9 15">Cytoskeleton</location>
        <location evidence="8 9 15">Microtubule organizing center</location>
        <location evidence="8 9 15">Centrosome</location>
        <location evidence="8 9 15">Centriole</location>
    </subcellularLocation>
    <subcellularLocation>
        <location evidence="8 9 16">Cell projection</location>
        <location evidence="8 9 16">Cilium</location>
    </subcellularLocation>
    <subcellularLocation>
        <location evidence="15">Cytoplasm</location>
        <location evidence="15">Cytoskeleton</location>
        <location evidence="15">Cilium basal body</location>
    </subcellularLocation>
    <subcellularLocation>
        <location evidence="2">Cytoplasmic vesicle</location>
    </subcellularLocation>
    <text evidence="2 8 9 14 16">Displaced from centriolar satellites in response to cellular stress, such as ultraviolet light (UV) radiation or heat shock (By similarity). Found in the connecting cilium of photoreceptor cells (PubMed:16632484, PubMed:23943788), base of cilium in kidney intramedullary collecting duct cells (PubMed:16682970). Localizes at the transition zone, a region between the basal body and the ciliary axoneme (PubMed:21725307). Localization at the ciliary transition zone as well as at centriolar satellites is BBsome-dependent (By similarity).</text>
</comment>
<comment type="alternative products">
    <event type="alternative splicing"/>
    <isoform>
        <id>Q6A078-1</id>
        <name evidence="6">1</name>
        <sequence type="displayed"/>
    </isoform>
    <isoform>
        <id>Q6A078-2</id>
        <name evidence="7">2</name>
        <sequence type="described" ref="VSP_052188 VSP_052189"/>
    </isoform>
</comment>
<comment type="tissue specificity">
    <text evidence="9">Expressed in multiple organs during early postnatal development, with highest levels in hindbrain.</text>
</comment>
<comment type="developmental stage">
    <text evidence="9">Similar levels from 7 dpc to 17 dpc in whole embryo and brain. In the cerebellum, expressed most strongly in dividing cells of the external granule layer.</text>
</comment>
<comment type="PTM">
    <text evidence="1">Ubiquitinated. May undergo monoubiquitination; monoubiquitination is inhibited in response to cellular stress, such as ultraviolet light (UV) radiation or heat shock, but does not cause its displacement from centriolar satellites (By similarity).</text>
</comment>
<comment type="disease">
    <text>Defects in Cep290 are a cause of early-onset retinal degeneration with autosomal recessive inheritance. The rd16 mutant carries a deletion of residues 1599-1897 in the Cep290 protein. Homozygous rd16 mice are characterized by the appearance of white retinal vessels at 1 month of age and large pigment patches at 2 months. Retinal degeneration is apparent as early as postnatal day 19 and progresses with age. The rd16 retina exhibits altered distribution of Rpgr and phototransduction proteins within the photoreceptor cells.</text>
</comment>
<comment type="disruption phenotype">
    <text evidence="13">Knockout mice appear healthy overall with some runting and a retinal degeneration phenotype. During embryonic development, at 16.5 dpc, they show defective midline fusion. Adult animals show a mild foliation defect in the cerebellum.</text>
</comment>
<proteinExistence type="evidence at protein level"/>
<reference evidence="18 19" key="1">
    <citation type="journal article" date="2005" name="Science">
        <title>The transcriptional landscape of the mammalian genome.</title>
        <authorList>
            <person name="Carninci P."/>
            <person name="Kasukawa T."/>
            <person name="Katayama S."/>
            <person name="Gough J."/>
            <person name="Frith M.C."/>
            <person name="Maeda N."/>
            <person name="Oyama R."/>
            <person name="Ravasi T."/>
            <person name="Lenhard B."/>
            <person name="Wells C."/>
            <person name="Kodzius R."/>
            <person name="Shimokawa K."/>
            <person name="Bajic V.B."/>
            <person name="Brenner S.E."/>
            <person name="Batalov S."/>
            <person name="Forrest A.R."/>
            <person name="Zavolan M."/>
            <person name="Davis M.J."/>
            <person name="Wilming L.G."/>
            <person name="Aidinis V."/>
            <person name="Allen J.E."/>
            <person name="Ambesi-Impiombato A."/>
            <person name="Apweiler R."/>
            <person name="Aturaliya R.N."/>
            <person name="Bailey T.L."/>
            <person name="Bansal M."/>
            <person name="Baxter L."/>
            <person name="Beisel K.W."/>
            <person name="Bersano T."/>
            <person name="Bono H."/>
            <person name="Chalk A.M."/>
            <person name="Chiu K.P."/>
            <person name="Choudhary V."/>
            <person name="Christoffels A."/>
            <person name="Clutterbuck D.R."/>
            <person name="Crowe M.L."/>
            <person name="Dalla E."/>
            <person name="Dalrymple B.P."/>
            <person name="de Bono B."/>
            <person name="Della Gatta G."/>
            <person name="di Bernardo D."/>
            <person name="Down T."/>
            <person name="Engstrom P."/>
            <person name="Fagiolini M."/>
            <person name="Faulkner G."/>
            <person name="Fletcher C.F."/>
            <person name="Fukushima T."/>
            <person name="Furuno M."/>
            <person name="Futaki S."/>
            <person name="Gariboldi M."/>
            <person name="Georgii-Hemming P."/>
            <person name="Gingeras T.R."/>
            <person name="Gojobori T."/>
            <person name="Green R.E."/>
            <person name="Gustincich S."/>
            <person name="Harbers M."/>
            <person name="Hayashi Y."/>
            <person name="Hensch T.K."/>
            <person name="Hirokawa N."/>
            <person name="Hill D."/>
            <person name="Huminiecki L."/>
            <person name="Iacono M."/>
            <person name="Ikeo K."/>
            <person name="Iwama A."/>
            <person name="Ishikawa T."/>
            <person name="Jakt M."/>
            <person name="Kanapin A."/>
            <person name="Katoh M."/>
            <person name="Kawasawa Y."/>
            <person name="Kelso J."/>
            <person name="Kitamura H."/>
            <person name="Kitano H."/>
            <person name="Kollias G."/>
            <person name="Krishnan S.P."/>
            <person name="Kruger A."/>
            <person name="Kummerfeld S.K."/>
            <person name="Kurochkin I.V."/>
            <person name="Lareau L.F."/>
            <person name="Lazarevic D."/>
            <person name="Lipovich L."/>
            <person name="Liu J."/>
            <person name="Liuni S."/>
            <person name="McWilliam S."/>
            <person name="Madan Babu M."/>
            <person name="Madera M."/>
            <person name="Marchionni L."/>
            <person name="Matsuda H."/>
            <person name="Matsuzawa S."/>
            <person name="Miki H."/>
            <person name="Mignone F."/>
            <person name="Miyake S."/>
            <person name="Morris K."/>
            <person name="Mottagui-Tabar S."/>
            <person name="Mulder N."/>
            <person name="Nakano N."/>
            <person name="Nakauchi H."/>
            <person name="Ng P."/>
            <person name="Nilsson R."/>
            <person name="Nishiguchi S."/>
            <person name="Nishikawa S."/>
            <person name="Nori F."/>
            <person name="Ohara O."/>
            <person name="Okazaki Y."/>
            <person name="Orlando V."/>
            <person name="Pang K.C."/>
            <person name="Pavan W.J."/>
            <person name="Pavesi G."/>
            <person name="Pesole G."/>
            <person name="Petrovsky N."/>
            <person name="Piazza S."/>
            <person name="Reed J."/>
            <person name="Reid J.F."/>
            <person name="Ring B.Z."/>
            <person name="Ringwald M."/>
            <person name="Rost B."/>
            <person name="Ruan Y."/>
            <person name="Salzberg S.L."/>
            <person name="Sandelin A."/>
            <person name="Schneider C."/>
            <person name="Schoenbach C."/>
            <person name="Sekiguchi K."/>
            <person name="Semple C.A."/>
            <person name="Seno S."/>
            <person name="Sessa L."/>
            <person name="Sheng Y."/>
            <person name="Shibata Y."/>
            <person name="Shimada H."/>
            <person name="Shimada K."/>
            <person name="Silva D."/>
            <person name="Sinclair B."/>
            <person name="Sperling S."/>
            <person name="Stupka E."/>
            <person name="Sugiura K."/>
            <person name="Sultana R."/>
            <person name="Takenaka Y."/>
            <person name="Taki K."/>
            <person name="Tammoja K."/>
            <person name="Tan S.L."/>
            <person name="Tang S."/>
            <person name="Taylor M.S."/>
            <person name="Tegner J."/>
            <person name="Teichmann S.A."/>
            <person name="Ueda H.R."/>
            <person name="van Nimwegen E."/>
            <person name="Verardo R."/>
            <person name="Wei C.L."/>
            <person name="Yagi K."/>
            <person name="Yamanishi H."/>
            <person name="Zabarovsky E."/>
            <person name="Zhu S."/>
            <person name="Zimmer A."/>
            <person name="Hide W."/>
            <person name="Bult C."/>
            <person name="Grimmond S.M."/>
            <person name="Teasdale R.D."/>
            <person name="Liu E.T."/>
            <person name="Brusic V."/>
            <person name="Quackenbush J."/>
            <person name="Wahlestedt C."/>
            <person name="Mattick J.S."/>
            <person name="Hume D.A."/>
            <person name="Kai C."/>
            <person name="Sasaki D."/>
            <person name="Tomaru Y."/>
            <person name="Fukuda S."/>
            <person name="Kanamori-Katayama M."/>
            <person name="Suzuki M."/>
            <person name="Aoki J."/>
            <person name="Arakawa T."/>
            <person name="Iida J."/>
            <person name="Imamura K."/>
            <person name="Itoh M."/>
            <person name="Kato T."/>
            <person name="Kawaji H."/>
            <person name="Kawagashira N."/>
            <person name="Kawashima T."/>
            <person name="Kojima M."/>
            <person name="Kondo S."/>
            <person name="Konno H."/>
            <person name="Nakano K."/>
            <person name="Ninomiya N."/>
            <person name="Nishio T."/>
            <person name="Okada M."/>
            <person name="Plessy C."/>
            <person name="Shibata K."/>
            <person name="Shiraki T."/>
            <person name="Suzuki S."/>
            <person name="Tagami M."/>
            <person name="Waki K."/>
            <person name="Watahiki A."/>
            <person name="Okamura-Oho Y."/>
            <person name="Suzuki H."/>
            <person name="Kawai J."/>
            <person name="Hayashizaki Y."/>
        </authorList>
    </citation>
    <scope>NUCLEOTIDE SEQUENCE [LARGE SCALE MRNA] (ISOFORM 2)</scope>
    <source>
        <strain evidence="19">C57BL/6J</strain>
        <tissue evidence="19">Testis</tissue>
    </source>
</reference>
<reference key="2">
    <citation type="journal article" date="2009" name="PLoS Biol.">
        <title>Lineage-specific biology revealed by a finished genome assembly of the mouse.</title>
        <authorList>
            <person name="Church D.M."/>
            <person name="Goodstadt L."/>
            <person name="Hillier L.W."/>
            <person name="Zody M.C."/>
            <person name="Goldstein S."/>
            <person name="She X."/>
            <person name="Bult C.J."/>
            <person name="Agarwala R."/>
            <person name="Cherry J.L."/>
            <person name="DiCuccio M."/>
            <person name="Hlavina W."/>
            <person name="Kapustin Y."/>
            <person name="Meric P."/>
            <person name="Maglott D."/>
            <person name="Birtle Z."/>
            <person name="Marques A.C."/>
            <person name="Graves T."/>
            <person name="Zhou S."/>
            <person name="Teague B."/>
            <person name="Potamousis K."/>
            <person name="Churas C."/>
            <person name="Place M."/>
            <person name="Herschleb J."/>
            <person name="Runnheim R."/>
            <person name="Forrest D."/>
            <person name="Amos-Landgraf J."/>
            <person name="Schwartz D.C."/>
            <person name="Cheng Z."/>
            <person name="Lindblad-Toh K."/>
            <person name="Eichler E.E."/>
            <person name="Ponting C.P."/>
        </authorList>
    </citation>
    <scope>NUCLEOTIDE SEQUENCE [LARGE SCALE GENOMIC DNA]</scope>
    <source>
        <strain>C57BL/6J</strain>
    </source>
</reference>
<reference evidence="18 20" key="3">
    <citation type="journal article" date="2004" name="DNA Res.">
        <title>Prediction of the coding sequences of mouse homologues of KIAA gene: IV. The complete nucleotide sequences of 500 mouse KIAA-homologous cDNAs identified by screening of terminal sequences of cDNA clones randomly sampled from size-fractionated libraries.</title>
        <authorList>
            <person name="Okazaki N."/>
            <person name="Kikuno R."/>
            <person name="Ohara R."/>
            <person name="Inamoto S."/>
            <person name="Koseki H."/>
            <person name="Hiraoka S."/>
            <person name="Saga Y."/>
            <person name="Seino S."/>
            <person name="Nishimura M."/>
            <person name="Kaisho T."/>
            <person name="Hoshino K."/>
            <person name="Kitamura H."/>
            <person name="Nagase T."/>
            <person name="Ohara O."/>
            <person name="Koga H."/>
        </authorList>
    </citation>
    <scope>NUCLEOTIDE SEQUENCE [LARGE SCALE MRNA] OF 1103-2472 (ISOFORM 1)</scope>
    <source>
        <tissue evidence="20">Fetal brain</tissue>
    </source>
</reference>
<reference evidence="18" key="4">
    <citation type="journal article" date="2006" name="Hum. Mol. Genet.">
        <title>In-frame deletion in a novel centrosomal/ciliary protein CEP290/NPHP6 perturbs its interaction with RPGR and results in early-onset retinal degeneration in the rd16 mouse.</title>
        <authorList>
            <person name="Chang B."/>
            <person name="Khanna H."/>
            <person name="Hawes N."/>
            <person name="Jimeno D."/>
            <person name="He S."/>
            <person name="Lillo C."/>
            <person name="Parapuram S.K."/>
            <person name="Cheng H."/>
            <person name="Scott A."/>
            <person name="Hurd R.E."/>
            <person name="Sayer J.A."/>
            <person name="Otto E.A."/>
            <person name="Attanasio M."/>
            <person name="O'Toole J.F."/>
            <person name="Jin G."/>
            <person name="Shou C."/>
            <person name="Hildebrandt F."/>
            <person name="Williams D.S."/>
            <person name="Heckenlively J.R."/>
            <person name="Swaroop A."/>
        </authorList>
    </citation>
    <scope>INVOLVEMENT IN EARLY-ONSET RETINAL DEGENERATION</scope>
    <scope>FUNCTION</scope>
    <scope>INTERACTION WITH RPGR</scope>
    <scope>SUBUNIT</scope>
    <scope>SUBCELLULAR LOCATION</scope>
</reference>
<reference evidence="18" key="5">
    <citation type="journal article" date="2006" name="Nat. Genet.">
        <title>Mutations in CEP290, which encodes a centrosomal protein, cause pleiotropic forms of Joubert syndrome.</title>
        <authorList>
            <consortium name="International Joubert syndrome related disorders (JSRD) study group"/>
            <person name="Valente E.M."/>
            <person name="Silhavy J.L."/>
            <person name="Brancati F."/>
            <person name="Barrano G."/>
            <person name="Krishnaswami S.R."/>
            <person name="Castori M."/>
            <person name="Lancaster M.A."/>
            <person name="Boltshauser E."/>
            <person name="Boccone L."/>
            <person name="Al-Gazali L."/>
            <person name="Fazzi E."/>
            <person name="Signorini S."/>
            <person name="Louie C.M."/>
            <person name="Bellacchio E."/>
            <person name="Bertini E."/>
            <person name="Dallapiccola B."/>
            <person name="Gleeson J.G."/>
        </authorList>
    </citation>
    <scope>MUTAGENESIS OF TRP-7</scope>
    <scope>SUBCELLULAR LOCATION</scope>
    <scope>DEVELOPMENTAL STAGE</scope>
    <scope>TISSUE SPECIFICITY</scope>
</reference>
<reference evidence="18" key="6">
    <citation type="journal article" date="2006" name="Nat. Genet.">
        <title>The centrosomal protein nephrocystin-6 is mutated in Joubert syndrome and activates transcription factor ATF4.</title>
        <authorList>
            <person name="Sayer J.A."/>
            <person name="Otto E.A."/>
            <person name="O'toole J.F."/>
            <person name="Nurnberg G."/>
            <person name="Kennedy M.A."/>
            <person name="Becker C."/>
            <person name="Hennies H.C."/>
            <person name="Helou J."/>
            <person name="Attanasio M."/>
            <person name="Fausett B.V."/>
            <person name="Utsch B."/>
            <person name="Khanna H."/>
            <person name="Liu Y."/>
            <person name="Drummond I."/>
            <person name="Kawakami I."/>
            <person name="Kusakabe T."/>
            <person name="Tsuda M."/>
            <person name="Ma L."/>
            <person name="Lee H."/>
            <person name="Larson R.G."/>
            <person name="Allen S.J."/>
            <person name="Wilkinson C.J."/>
            <person name="Nigg E.A."/>
            <person name="Shou C."/>
            <person name="Lillo C."/>
            <person name="Williams D.S."/>
            <person name="Hoppe B."/>
            <person name="Kemper M.J."/>
            <person name="Neuhaus T."/>
            <person name="Parisi M.A."/>
            <person name="Glass I.A."/>
            <person name="Petry M."/>
            <person name="Kispert A."/>
            <person name="Gloy J."/>
            <person name="Ganner A."/>
            <person name="Walz G."/>
            <person name="Zhu X."/>
            <person name="Goldman D."/>
            <person name="Nurnberg P."/>
            <person name="Swaroop A."/>
            <person name="Leroux M.R."/>
            <person name="Hildebrandt F."/>
        </authorList>
    </citation>
    <scope>SUBCELLULAR LOCATION</scope>
</reference>
<reference key="7">
    <citation type="journal article" date="2008" name="Hum. Mutat.">
        <title>Mutations of the CEP290 gene encoding a centrosomal protein cause Meckel-Gruber syndrome.</title>
        <authorList>
            <person name="Frank V."/>
            <person name="den Hollander A.I."/>
            <person name="Bruechle N.O."/>
            <person name="Zonneveld M.N."/>
            <person name="Nuernberg G."/>
            <person name="Becker C."/>
            <person name="Du Bois G."/>
            <person name="Kendziorra H."/>
            <person name="Roosing S."/>
            <person name="Senderek J."/>
            <person name="Nuernberg P."/>
            <person name="Cremers F.P."/>
            <person name="Zerres K."/>
            <person name="Bergmann C."/>
        </authorList>
    </citation>
    <scope>INTERACTION WITH PCM1</scope>
</reference>
<reference key="8">
    <citation type="journal article" date="2010" name="Cell">
        <title>A tissue-specific atlas of mouse protein phosphorylation and expression.</title>
        <authorList>
            <person name="Huttlin E.L."/>
            <person name="Jedrychowski M.P."/>
            <person name="Elias J.E."/>
            <person name="Goswami T."/>
            <person name="Rad R."/>
            <person name="Beausoleil S.A."/>
            <person name="Villen J."/>
            <person name="Haas W."/>
            <person name="Sowa M.E."/>
            <person name="Gygi S.P."/>
        </authorList>
    </citation>
    <scope>IDENTIFICATION BY MASS SPECTROMETRY [LARGE SCALE ANALYSIS]</scope>
    <source>
        <tissue>Testis</tissue>
    </source>
</reference>
<reference key="9">
    <citation type="journal article" date="2011" name="Cell">
        <title>Mapping the NPHP-JBTS-MKS protein network reveals ciliopathy disease genes and pathways.</title>
        <authorList>
            <person name="Sang L."/>
            <person name="Miller J.J."/>
            <person name="Corbit K.C."/>
            <person name="Giles R.H."/>
            <person name="Brauer M.J."/>
            <person name="Otto E.A."/>
            <person name="Baye L.M."/>
            <person name="Wen X."/>
            <person name="Scales S.J."/>
            <person name="Kwong M."/>
            <person name="Huntzicker E.G."/>
            <person name="Sfakianos M.K."/>
            <person name="Sandoval W."/>
            <person name="Bazan J.F."/>
            <person name="Kulkarni P."/>
            <person name="Garcia-Gonzalo F.R."/>
            <person name="Seol A.D."/>
            <person name="O'Toole J.F."/>
            <person name="Held S."/>
            <person name="Reutter H.M."/>
            <person name="Lane W.S."/>
            <person name="Rafiq M.A."/>
            <person name="Noor A."/>
            <person name="Ansar M."/>
            <person name="Devi A.R."/>
            <person name="Sheffield V.C."/>
            <person name="Slusarski D.C."/>
            <person name="Vincent J.B."/>
            <person name="Doherty D.A."/>
            <person name="Hildebrandt F."/>
            <person name="Reiter J.F."/>
            <person name="Jackson P.K."/>
        </authorList>
    </citation>
    <scope>FUNCTION</scope>
    <scope>INTERACTION WITH IQCB1</scope>
</reference>
<reference key="10">
    <citation type="journal article" date="2011" name="Nat. Genet.">
        <title>A transition zone complex regulates mammalian ciliogenesis and ciliary membrane composition.</title>
        <authorList>
            <person name="Garcia-Gonzalo F.R."/>
            <person name="Corbit K.C."/>
            <person name="Sirerol-Piquer M.S."/>
            <person name="Ramaswami G."/>
            <person name="Otto E.A."/>
            <person name="Noriega T.R."/>
            <person name="Seol A.D."/>
            <person name="Robinson J.F."/>
            <person name="Bennett C.L."/>
            <person name="Josifova D.J."/>
            <person name="Garcia-Verdugo J.M."/>
            <person name="Katsanis N."/>
            <person name="Hildebrandt F."/>
            <person name="Reiter J.F."/>
        </authorList>
    </citation>
    <scope>FUNCTION</scope>
    <scope>SUBCELLULAR LOCATION</scope>
    <scope>IDENTIFICATION IN THE TECTONIC-LIKE COMPLEX</scope>
</reference>
<reference key="11">
    <citation type="journal article" date="2011" name="Nat. Med.">
        <title>Defective Wnt-dependent cerebellar midline fusion in a mouse model of Joubert syndrome.</title>
        <authorList>
            <person name="Lancaster M.A."/>
            <person name="Gopal D.J."/>
            <person name="Kim J."/>
            <person name="Saleem S.N."/>
            <person name="Silhavy J.L."/>
            <person name="Louie C.M."/>
            <person name="Thacker B.E."/>
            <person name="Williams Y."/>
            <person name="Zaki M.S."/>
            <person name="Gleeson J.G."/>
        </authorList>
    </citation>
    <scope>DISRUPTION PHENOTYPE</scope>
</reference>
<reference key="12">
    <citation type="journal article" date="2014" name="Cell. Mol. Life Sci.">
        <title>The nucleotide-binding proteins Nubp1 and Nubp2 are negative regulators of ciliogenesis.</title>
        <authorList>
            <person name="Kypri E."/>
            <person name="Christodoulou A."/>
            <person name="Maimaris G."/>
            <person name="Lethan M."/>
            <person name="Markaki M."/>
            <person name="Lysandrou C."/>
            <person name="Lederer C.W."/>
            <person name="Tavernarakis N."/>
            <person name="Geimer S."/>
            <person name="Pedersen L.B."/>
            <person name="Santama N."/>
        </authorList>
    </citation>
    <scope>SUBCELLULAR LOCATION</scope>
</reference>
<reference key="13">
    <citation type="journal article" date="2014" name="Hum. Mol. Genet.">
        <title>BBS mutations modify phenotypic expression of CEP290-related ciliopathies.</title>
        <authorList>
            <person name="Zhang Y."/>
            <person name="Seo S."/>
            <person name="Bhattarai S."/>
            <person name="Bugge K."/>
            <person name="Searby C.C."/>
            <person name="Zhang Q."/>
            <person name="Drack A.V."/>
            <person name="Stone E.M."/>
            <person name="Sheffield V.C."/>
        </authorList>
    </citation>
    <scope>SUBCELLULAR LOCATION</scope>
</reference>
<feature type="chain" id="PRO_0000258013" description="Centrosomal protein of 290 kDa">
    <location>
        <begin position="1"/>
        <end position="2472"/>
    </location>
</feature>
<feature type="region of interest" description="Self-association (with itself or C-terminus)" evidence="2">
    <location>
        <begin position="1"/>
        <end position="689"/>
    </location>
</feature>
<feature type="region of interest" description="Disordered" evidence="5">
    <location>
        <begin position="128"/>
        <end position="164"/>
    </location>
</feature>
<feature type="region of interest" description="Interaction with IQCB1" evidence="2">
    <location>
        <begin position="690"/>
        <end position="890"/>
    </location>
</feature>
<feature type="region of interest" description="Disordered" evidence="5">
    <location>
        <begin position="1691"/>
        <end position="1713"/>
    </location>
</feature>
<feature type="region of interest" description="Self-association (with itself or N-terminus)" evidence="2">
    <location>
        <begin position="1960"/>
        <end position="2472"/>
    </location>
</feature>
<feature type="region of interest" description="Disordered" evidence="5">
    <location>
        <begin position="2451"/>
        <end position="2472"/>
    </location>
</feature>
<feature type="coiled-coil region" evidence="4">
    <location>
        <begin position="59"/>
        <end position="747"/>
    </location>
</feature>
<feature type="coiled-coil region" evidence="4">
    <location>
        <begin position="1129"/>
        <end position="1392"/>
    </location>
</feature>
<feature type="coiled-coil region" evidence="4">
    <location>
        <begin position="1459"/>
        <end position="1492"/>
    </location>
</feature>
<feature type="compositionally biased region" description="Basic and acidic residues" evidence="5">
    <location>
        <begin position="137"/>
        <end position="164"/>
    </location>
</feature>
<feature type="compositionally biased region" description="Polar residues" evidence="5">
    <location>
        <begin position="1697"/>
        <end position="1713"/>
    </location>
</feature>
<feature type="splice variant" id="VSP_052188" description="In isoform 2." evidence="17">
    <location>
        <begin position="1"/>
        <end position="1664"/>
    </location>
</feature>
<feature type="splice variant" id="VSP_052189" description="In isoform 2." evidence="17">
    <original>R</original>
    <variation>M</variation>
    <location>
        <position position="1665"/>
    </location>
</feature>
<feature type="mutagenesis site" description="Centrosomal localization retained." evidence="9">
    <original>W</original>
    <variation>C</variation>
    <location>
        <position position="7"/>
    </location>
</feature>
<feature type="sequence conflict" description="In Ref. 3; BAD32218." evidence="18" ref="3">
    <original>A</original>
    <variation>P</variation>
    <location>
        <position position="1425"/>
    </location>
</feature>
<feature type="sequence conflict" description="In Ref. 3; BAD32218." evidence="18" ref="3">
    <original>S</original>
    <variation>A</variation>
    <location>
        <position position="1470"/>
    </location>
</feature>
<feature type="sequence conflict" description="In Ref. 3; BAD32218." evidence="18" ref="3">
    <original>H</original>
    <variation>Q</variation>
    <location>
        <position position="1533"/>
    </location>
</feature>
<feature type="sequence conflict" description="In Ref. 3; BAD32218." evidence="18" ref="3">
    <original>N</original>
    <variation>T</variation>
    <location>
        <position position="1544"/>
    </location>
</feature>
<feature type="sequence conflict" description="In Ref. 3; BAD32218." evidence="18" ref="3">
    <original>K</original>
    <variation>R</variation>
    <location>
        <position position="1559"/>
    </location>
</feature>
<feature type="sequence conflict" description="In Ref. 3; BAD32218." evidence="18" ref="3">
    <original>H</original>
    <variation>N</variation>
    <location>
        <position position="1686"/>
    </location>
</feature>
<feature type="sequence conflict" description="In Ref. 3; BAD32218." evidence="18" ref="3">
    <original>Q</original>
    <variation>E</variation>
    <location>
        <position position="2037"/>
    </location>
</feature>
<feature type="sequence conflict" description="In Ref. 3; BAD32218." evidence="18" ref="3">
    <original>V</original>
    <variation>L</variation>
    <location>
        <position position="2134"/>
    </location>
</feature>
<feature type="sequence conflict" description="In Ref. 3; BAD32218." evidence="18" ref="3">
    <original>A</original>
    <variation>G</variation>
    <location>
        <position position="2158"/>
    </location>
</feature>
<feature type="sequence conflict" description="In Ref. 3; BAD32218." evidence="18" ref="3">
    <original>M</original>
    <variation>L</variation>
    <location>
        <position position="2345"/>
    </location>
</feature>
<feature type="sequence conflict" description="In Ref. 3; BAD32218." evidence="18" ref="3">
    <original>L</original>
    <variation>S</variation>
    <location>
        <position position="2389"/>
    </location>
</feature>
<protein>
    <recommendedName>
        <fullName>Centrosomal protein of 290 kDa</fullName>
        <shortName>Cep290</shortName>
    </recommendedName>
    <alternativeName>
        <fullName>Bardet-Biedl syndrome 14 protein homolog</fullName>
    </alternativeName>
    <alternativeName>
        <fullName>Nephrocystin-6</fullName>
    </alternativeName>
</protein>